<evidence type="ECO:0000250" key="1"/>
<evidence type="ECO:0000305" key="2"/>
<organism>
    <name type="scientific">Cryptomeria japonica</name>
    <name type="common">Japanese cedar</name>
    <name type="synonym">Cupressus japonica</name>
    <dbReference type="NCBI Taxonomy" id="3369"/>
    <lineage>
        <taxon>Eukaryota</taxon>
        <taxon>Viridiplantae</taxon>
        <taxon>Streptophyta</taxon>
        <taxon>Embryophyta</taxon>
        <taxon>Tracheophyta</taxon>
        <taxon>Spermatophyta</taxon>
        <taxon>Pinopsida</taxon>
        <taxon>Pinidae</taxon>
        <taxon>Conifers II</taxon>
        <taxon>Cupressales</taxon>
        <taxon>Cupressaceae</taxon>
        <taxon>Cryptomeria</taxon>
    </lineage>
</organism>
<feature type="chain" id="PRO_0000354249" description="Small ribosomal subunit protein uS15c">
    <location>
        <begin position="1"/>
        <end position="86"/>
    </location>
</feature>
<gene>
    <name type="primary">rps15</name>
</gene>
<accession>B1VKJ1</accession>
<keyword id="KW-0150">Chloroplast</keyword>
<keyword id="KW-0934">Plastid</keyword>
<keyword id="KW-0687">Ribonucleoprotein</keyword>
<keyword id="KW-0689">Ribosomal protein</keyword>
<comment type="subunit">
    <text evidence="1">Part of the 30S ribosomal subunit.</text>
</comment>
<comment type="subcellular location">
    <subcellularLocation>
        <location>Plastid</location>
        <location>Chloroplast</location>
    </subcellularLocation>
</comment>
<comment type="similarity">
    <text evidence="2">Belongs to the universal ribosomal protein uS15 family.</text>
</comment>
<name>RR15_CRYJA</name>
<dbReference type="EMBL" id="AP009377">
    <property type="protein sequence ID" value="BAG16702.1"/>
    <property type="molecule type" value="Genomic_DNA"/>
</dbReference>
<dbReference type="RefSeq" id="YP_001806704.1">
    <property type="nucleotide sequence ID" value="NC_010548.1"/>
</dbReference>
<dbReference type="SMR" id="B1VKJ1"/>
<dbReference type="GeneID" id="6166550"/>
<dbReference type="KEGG" id="cjf:6166550"/>
<dbReference type="OrthoDB" id="441444at2759"/>
<dbReference type="GO" id="GO:0009507">
    <property type="term" value="C:chloroplast"/>
    <property type="evidence" value="ECO:0007669"/>
    <property type="project" value="UniProtKB-SubCell"/>
</dbReference>
<dbReference type="GO" id="GO:1990904">
    <property type="term" value="C:ribonucleoprotein complex"/>
    <property type="evidence" value="ECO:0007669"/>
    <property type="project" value="UniProtKB-KW"/>
</dbReference>
<dbReference type="GO" id="GO:0005840">
    <property type="term" value="C:ribosome"/>
    <property type="evidence" value="ECO:0007669"/>
    <property type="project" value="UniProtKB-KW"/>
</dbReference>
<dbReference type="GO" id="GO:0003735">
    <property type="term" value="F:structural constituent of ribosome"/>
    <property type="evidence" value="ECO:0007669"/>
    <property type="project" value="InterPro"/>
</dbReference>
<dbReference type="GO" id="GO:0006412">
    <property type="term" value="P:translation"/>
    <property type="evidence" value="ECO:0007669"/>
    <property type="project" value="UniProtKB-UniRule"/>
</dbReference>
<dbReference type="CDD" id="cd00677">
    <property type="entry name" value="S15_NS1_EPRS_RNA-bind"/>
    <property type="match status" value="1"/>
</dbReference>
<dbReference type="Gene3D" id="1.10.287.10">
    <property type="entry name" value="S15/NS1, RNA-binding"/>
    <property type="match status" value="1"/>
</dbReference>
<dbReference type="HAMAP" id="MF_01343_B">
    <property type="entry name" value="Ribosomal_uS15_B"/>
    <property type="match status" value="1"/>
</dbReference>
<dbReference type="InterPro" id="IPR000589">
    <property type="entry name" value="Ribosomal_uS15"/>
</dbReference>
<dbReference type="InterPro" id="IPR005290">
    <property type="entry name" value="Ribosomal_uS15_bac-type"/>
</dbReference>
<dbReference type="InterPro" id="IPR009068">
    <property type="entry name" value="uS15_NS1_RNA-bd_sf"/>
</dbReference>
<dbReference type="NCBIfam" id="TIGR00952">
    <property type="entry name" value="S15_bact"/>
    <property type="match status" value="1"/>
</dbReference>
<dbReference type="PANTHER" id="PTHR23321">
    <property type="entry name" value="RIBOSOMAL PROTEIN S15, BACTERIAL AND ORGANELLAR"/>
    <property type="match status" value="1"/>
</dbReference>
<dbReference type="PANTHER" id="PTHR23321:SF26">
    <property type="entry name" value="SMALL RIBOSOMAL SUBUNIT PROTEIN US15M"/>
    <property type="match status" value="1"/>
</dbReference>
<dbReference type="Pfam" id="PF00312">
    <property type="entry name" value="Ribosomal_S15"/>
    <property type="match status" value="1"/>
</dbReference>
<dbReference type="SMART" id="SM01387">
    <property type="entry name" value="Ribosomal_S15"/>
    <property type="match status" value="1"/>
</dbReference>
<dbReference type="SUPFAM" id="SSF47060">
    <property type="entry name" value="S15/NS1 RNA-binding domain"/>
    <property type="match status" value="1"/>
</dbReference>
<dbReference type="PROSITE" id="PS00362">
    <property type="entry name" value="RIBOSOMAL_S15"/>
    <property type="match status" value="1"/>
</dbReference>
<geneLocation type="chloroplast"/>
<protein>
    <recommendedName>
        <fullName evidence="2">Small ribosomal subunit protein uS15c</fullName>
    </recommendedName>
    <alternativeName>
        <fullName>30S ribosomal protein S15, chloroplastic</fullName>
    </alternativeName>
</protein>
<reference key="1">
    <citation type="journal article" date="2008" name="BMC Plant Biol.">
        <title>Complete nucleotide sequence of the Cryptomeria japonica D. Don. chloroplast genome and comparative chloroplast genomics: diversified genomic structure of coniferous species.</title>
        <authorList>
            <person name="Hirao T."/>
            <person name="Watanabe A."/>
            <person name="Kurita M."/>
            <person name="Kondo T."/>
            <person name="Takata K."/>
        </authorList>
    </citation>
    <scope>NUCLEOTIDE SEQUENCE [LARGE SCALE GENOMIC DNA]</scope>
</reference>
<proteinExistence type="inferred from homology"/>
<sequence>MIKNLSVRPSLIPREQRGSVESQVCYLTGRIKRLTEHLDLHGRDYSSQRGLWKIVGKRKRLLIYLFKKDRLRYKSLIGQLDMRGPR</sequence>